<feature type="chain" id="PRO_1000016241" description="ATP phosphoribosyltransferase regulatory subunit">
    <location>
        <begin position="1"/>
        <end position="384"/>
    </location>
</feature>
<evidence type="ECO:0000255" key="1">
    <source>
        <dbReference type="HAMAP-Rule" id="MF_00125"/>
    </source>
</evidence>
<accession>A1TM36</accession>
<reference key="1">
    <citation type="submission" date="2006-12" db="EMBL/GenBank/DDBJ databases">
        <title>Complete sequence of Acidovorax avenae subsp. citrulli AAC00-1.</title>
        <authorList>
            <person name="Copeland A."/>
            <person name="Lucas S."/>
            <person name="Lapidus A."/>
            <person name="Barry K."/>
            <person name="Detter J.C."/>
            <person name="Glavina del Rio T."/>
            <person name="Dalin E."/>
            <person name="Tice H."/>
            <person name="Pitluck S."/>
            <person name="Kiss H."/>
            <person name="Brettin T."/>
            <person name="Bruce D."/>
            <person name="Han C."/>
            <person name="Tapia R."/>
            <person name="Gilna P."/>
            <person name="Schmutz J."/>
            <person name="Larimer F."/>
            <person name="Land M."/>
            <person name="Hauser L."/>
            <person name="Kyrpides N."/>
            <person name="Kim E."/>
            <person name="Stahl D."/>
            <person name="Richardson P."/>
        </authorList>
    </citation>
    <scope>NUCLEOTIDE SEQUENCE [LARGE SCALE GENOMIC DNA]</scope>
    <source>
        <strain>AAC00-1</strain>
    </source>
</reference>
<gene>
    <name evidence="1" type="primary">hisZ</name>
    <name type="ordered locus">Aave_1433</name>
</gene>
<name>HISZ_PARC0</name>
<protein>
    <recommendedName>
        <fullName evidence="1">ATP phosphoribosyltransferase regulatory subunit</fullName>
    </recommendedName>
</protein>
<dbReference type="EMBL" id="CP000512">
    <property type="protein sequence ID" value="ABM32024.1"/>
    <property type="molecule type" value="Genomic_DNA"/>
</dbReference>
<dbReference type="RefSeq" id="WP_011794574.1">
    <property type="nucleotide sequence ID" value="NC_008752.1"/>
</dbReference>
<dbReference type="SMR" id="A1TM36"/>
<dbReference type="STRING" id="397945.Aave_1433"/>
<dbReference type="KEGG" id="aav:Aave_1433"/>
<dbReference type="eggNOG" id="COG3705">
    <property type="taxonomic scope" value="Bacteria"/>
</dbReference>
<dbReference type="HOGENOM" id="CLU_025113_0_1_4"/>
<dbReference type="OrthoDB" id="9769617at2"/>
<dbReference type="UniPathway" id="UPA00031">
    <property type="reaction ID" value="UER00006"/>
</dbReference>
<dbReference type="Proteomes" id="UP000002596">
    <property type="component" value="Chromosome"/>
</dbReference>
<dbReference type="GO" id="GO:0005737">
    <property type="term" value="C:cytoplasm"/>
    <property type="evidence" value="ECO:0007669"/>
    <property type="project" value="UniProtKB-SubCell"/>
</dbReference>
<dbReference type="GO" id="GO:0004821">
    <property type="term" value="F:histidine-tRNA ligase activity"/>
    <property type="evidence" value="ECO:0007669"/>
    <property type="project" value="TreeGrafter"/>
</dbReference>
<dbReference type="GO" id="GO:0006427">
    <property type="term" value="P:histidyl-tRNA aminoacylation"/>
    <property type="evidence" value="ECO:0007669"/>
    <property type="project" value="TreeGrafter"/>
</dbReference>
<dbReference type="GO" id="GO:0000105">
    <property type="term" value="P:L-histidine biosynthetic process"/>
    <property type="evidence" value="ECO:0007669"/>
    <property type="project" value="UniProtKB-UniRule"/>
</dbReference>
<dbReference type="CDD" id="cd00773">
    <property type="entry name" value="HisRS-like_core"/>
    <property type="match status" value="1"/>
</dbReference>
<dbReference type="Gene3D" id="3.30.930.10">
    <property type="entry name" value="Bira Bifunctional Protein, Domain 2"/>
    <property type="match status" value="1"/>
</dbReference>
<dbReference type="HAMAP" id="MF_00125">
    <property type="entry name" value="HisZ"/>
    <property type="match status" value="1"/>
</dbReference>
<dbReference type="InterPro" id="IPR045864">
    <property type="entry name" value="aa-tRNA-synth_II/BPL/LPL"/>
</dbReference>
<dbReference type="InterPro" id="IPR041715">
    <property type="entry name" value="HisRS-like_core"/>
</dbReference>
<dbReference type="InterPro" id="IPR004516">
    <property type="entry name" value="HisRS/HisZ"/>
</dbReference>
<dbReference type="InterPro" id="IPR004517">
    <property type="entry name" value="HisZ"/>
</dbReference>
<dbReference type="NCBIfam" id="NF008935">
    <property type="entry name" value="PRK12292.1-1"/>
    <property type="match status" value="1"/>
</dbReference>
<dbReference type="NCBIfam" id="NF009086">
    <property type="entry name" value="PRK12421.1"/>
    <property type="match status" value="1"/>
</dbReference>
<dbReference type="PANTHER" id="PTHR43707:SF1">
    <property type="entry name" value="HISTIDINE--TRNA LIGASE, MITOCHONDRIAL-RELATED"/>
    <property type="match status" value="1"/>
</dbReference>
<dbReference type="PANTHER" id="PTHR43707">
    <property type="entry name" value="HISTIDYL-TRNA SYNTHETASE"/>
    <property type="match status" value="1"/>
</dbReference>
<dbReference type="Pfam" id="PF13393">
    <property type="entry name" value="tRNA-synt_His"/>
    <property type="match status" value="1"/>
</dbReference>
<dbReference type="PIRSF" id="PIRSF001549">
    <property type="entry name" value="His-tRNA_synth"/>
    <property type="match status" value="1"/>
</dbReference>
<dbReference type="SUPFAM" id="SSF55681">
    <property type="entry name" value="Class II aaRS and biotin synthetases"/>
    <property type="match status" value="1"/>
</dbReference>
<comment type="function">
    <text evidence="1">Required for the first step of histidine biosynthesis. May allow the feedback regulation of ATP phosphoribosyltransferase activity by histidine.</text>
</comment>
<comment type="pathway">
    <text evidence="1">Amino-acid biosynthesis; L-histidine biosynthesis; L-histidine from 5-phospho-alpha-D-ribose 1-diphosphate: step 1/9.</text>
</comment>
<comment type="subunit">
    <text evidence="1">Heteromultimer composed of HisG and HisZ subunits.</text>
</comment>
<comment type="subcellular location">
    <subcellularLocation>
        <location evidence="1">Cytoplasm</location>
    </subcellularLocation>
</comment>
<comment type="miscellaneous">
    <text>This function is generally fulfilled by the C-terminal part of HisG, which is missing in some bacteria such as this one.</text>
</comment>
<comment type="similarity">
    <text evidence="1">Belongs to the class-II aminoacyl-tRNA synthetase family. HisZ subfamily.</text>
</comment>
<proteinExistence type="inferred from homology"/>
<organism>
    <name type="scientific">Paracidovorax citrulli (strain AAC00-1)</name>
    <name type="common">Acidovorax citrulli</name>
    <dbReference type="NCBI Taxonomy" id="397945"/>
    <lineage>
        <taxon>Bacteria</taxon>
        <taxon>Pseudomonadati</taxon>
        <taxon>Pseudomonadota</taxon>
        <taxon>Betaproteobacteria</taxon>
        <taxon>Burkholderiales</taxon>
        <taxon>Comamonadaceae</taxon>
        <taxon>Paracidovorax</taxon>
    </lineage>
</organism>
<keyword id="KW-0028">Amino-acid biosynthesis</keyword>
<keyword id="KW-0963">Cytoplasm</keyword>
<keyword id="KW-0368">Histidine biosynthesis</keyword>
<sequence>MSAWVLPDHIADVLPSEARHIEELRRGLIDTARGYGYELVMPPMLEHLESLLSGTGEALDLQTFKLVDQLSGRSIGLRADMTQQVARIDAHLLNRSGVTRLCYCGPVLHTRPDRPRATREPLQFGAEIYGHSGMEADLESVLLALDCLHLAGVEGVSVDLSDARVVRTLLEPIAADSATVRRIYAALAAKDASELSQASAGLPSGTRRALSAVLELYGDASVLDEARTALSDVAGVEEVLANLKSIAAHLEGRTVSFDLADLRGYSYYSGARFTIYARNATDAVVRGGRYDEVGAAFGRTRPAAGFSLDIKQLVGIVPPRTLKAAIRAPWAATPDAHRFIAQLRSAGETVVCVLPGHESQVQEFQCDRELVLEQGQWMVRPLPY</sequence>